<proteinExistence type="inferred from homology"/>
<keyword id="KW-0687">Ribonucleoprotein</keyword>
<keyword id="KW-0689">Ribosomal protein</keyword>
<keyword id="KW-0694">RNA-binding</keyword>
<keyword id="KW-0699">rRNA-binding</keyword>
<comment type="function">
    <text evidence="1">Binds the lower part of the 30S subunit head. Binds mRNA in the 70S ribosome, positioning it for translation.</text>
</comment>
<comment type="subunit">
    <text evidence="1">Part of the 30S ribosomal subunit. Forms a tight complex with proteins S10 and S14.</text>
</comment>
<comment type="similarity">
    <text evidence="1">Belongs to the universal ribosomal protein uS3 family.</text>
</comment>
<evidence type="ECO:0000255" key="1">
    <source>
        <dbReference type="HAMAP-Rule" id="MF_01309"/>
    </source>
</evidence>
<evidence type="ECO:0000305" key="2"/>
<reference key="1">
    <citation type="journal article" date="2008" name="J. Bacteriol.">
        <title>Genome sequence of Lactobacillus helveticus: an organism distinguished by selective gene loss and IS element expansion.</title>
        <authorList>
            <person name="Callanan M."/>
            <person name="Kaleta P."/>
            <person name="O'Callaghan J."/>
            <person name="O'Sullivan O."/>
            <person name="Jordan K."/>
            <person name="McAuliffe O."/>
            <person name="Sangrador-Vegas A."/>
            <person name="Slattery L."/>
            <person name="Fitzgerald G.F."/>
            <person name="Beresford T."/>
            <person name="Ross R.P."/>
        </authorList>
    </citation>
    <scope>NUCLEOTIDE SEQUENCE [LARGE SCALE GENOMIC DNA]</scope>
    <source>
        <strain>DPC 4571</strain>
    </source>
</reference>
<sequence>MGQKINPNGFRLGVIHDWESKWYADKGYKETLNEDLRIRKFISKKLKDASVSTVEIERAANRINISIHTAKPGMVIGKGGSEVEALRKQLNALTDKQVHINIVEIKKPDLDAELVADSIARQLEARIAFRRAMRQATQRAMRAGAKGIKVQTSGRLNGADMARREWHTEGRVPLQTLRADIDYAWVNAFTTYGEIGVQVWINRGEILPTRKNKPASKPTKGGNR</sequence>
<organism>
    <name type="scientific">Lactobacillus helveticus (strain DPC 4571)</name>
    <dbReference type="NCBI Taxonomy" id="405566"/>
    <lineage>
        <taxon>Bacteria</taxon>
        <taxon>Bacillati</taxon>
        <taxon>Bacillota</taxon>
        <taxon>Bacilli</taxon>
        <taxon>Lactobacillales</taxon>
        <taxon>Lactobacillaceae</taxon>
        <taxon>Lactobacillus</taxon>
    </lineage>
</organism>
<feature type="chain" id="PRO_0000323297" description="Small ribosomal subunit protein uS3">
    <location>
        <begin position="1"/>
        <end position="224"/>
    </location>
</feature>
<feature type="domain" description="KH type-2" evidence="1">
    <location>
        <begin position="38"/>
        <end position="106"/>
    </location>
</feature>
<protein>
    <recommendedName>
        <fullName evidence="1">Small ribosomal subunit protein uS3</fullName>
    </recommendedName>
    <alternativeName>
        <fullName evidence="2">30S ribosomal protein S3</fullName>
    </alternativeName>
</protein>
<dbReference type="EMBL" id="CP000517">
    <property type="protein sequence ID" value="ABX26542.1"/>
    <property type="molecule type" value="Genomic_DNA"/>
</dbReference>
<dbReference type="RefSeq" id="WP_012211379.1">
    <property type="nucleotide sequence ID" value="NC_010080.1"/>
</dbReference>
<dbReference type="SMR" id="A8YXL1"/>
<dbReference type="KEGG" id="lhe:lhv_0318"/>
<dbReference type="eggNOG" id="COG0092">
    <property type="taxonomic scope" value="Bacteria"/>
</dbReference>
<dbReference type="HOGENOM" id="CLU_058591_0_2_9"/>
<dbReference type="Proteomes" id="UP000000790">
    <property type="component" value="Chromosome"/>
</dbReference>
<dbReference type="GO" id="GO:0022627">
    <property type="term" value="C:cytosolic small ribosomal subunit"/>
    <property type="evidence" value="ECO:0007669"/>
    <property type="project" value="TreeGrafter"/>
</dbReference>
<dbReference type="GO" id="GO:0003729">
    <property type="term" value="F:mRNA binding"/>
    <property type="evidence" value="ECO:0007669"/>
    <property type="project" value="UniProtKB-UniRule"/>
</dbReference>
<dbReference type="GO" id="GO:0019843">
    <property type="term" value="F:rRNA binding"/>
    <property type="evidence" value="ECO:0007669"/>
    <property type="project" value="UniProtKB-UniRule"/>
</dbReference>
<dbReference type="GO" id="GO:0003735">
    <property type="term" value="F:structural constituent of ribosome"/>
    <property type="evidence" value="ECO:0007669"/>
    <property type="project" value="InterPro"/>
</dbReference>
<dbReference type="GO" id="GO:0006412">
    <property type="term" value="P:translation"/>
    <property type="evidence" value="ECO:0007669"/>
    <property type="project" value="UniProtKB-UniRule"/>
</dbReference>
<dbReference type="CDD" id="cd02412">
    <property type="entry name" value="KH-II_30S_S3"/>
    <property type="match status" value="1"/>
</dbReference>
<dbReference type="FunFam" id="3.30.300.20:FF:000001">
    <property type="entry name" value="30S ribosomal protein S3"/>
    <property type="match status" value="1"/>
</dbReference>
<dbReference type="Gene3D" id="3.30.300.20">
    <property type="match status" value="1"/>
</dbReference>
<dbReference type="Gene3D" id="3.30.1140.32">
    <property type="entry name" value="Ribosomal protein S3, C-terminal domain"/>
    <property type="match status" value="1"/>
</dbReference>
<dbReference type="HAMAP" id="MF_01309_B">
    <property type="entry name" value="Ribosomal_uS3_B"/>
    <property type="match status" value="1"/>
</dbReference>
<dbReference type="InterPro" id="IPR004087">
    <property type="entry name" value="KH_dom"/>
</dbReference>
<dbReference type="InterPro" id="IPR015946">
    <property type="entry name" value="KH_dom-like_a/b"/>
</dbReference>
<dbReference type="InterPro" id="IPR004044">
    <property type="entry name" value="KH_dom_type_2"/>
</dbReference>
<dbReference type="InterPro" id="IPR009019">
    <property type="entry name" value="KH_sf_prok-type"/>
</dbReference>
<dbReference type="InterPro" id="IPR036419">
    <property type="entry name" value="Ribosomal_S3_C_sf"/>
</dbReference>
<dbReference type="InterPro" id="IPR005704">
    <property type="entry name" value="Ribosomal_uS3_bac-typ"/>
</dbReference>
<dbReference type="InterPro" id="IPR001351">
    <property type="entry name" value="Ribosomal_uS3_C"/>
</dbReference>
<dbReference type="InterPro" id="IPR018280">
    <property type="entry name" value="Ribosomal_uS3_CS"/>
</dbReference>
<dbReference type="NCBIfam" id="TIGR01009">
    <property type="entry name" value="rpsC_bact"/>
    <property type="match status" value="1"/>
</dbReference>
<dbReference type="PANTHER" id="PTHR11760">
    <property type="entry name" value="30S/40S RIBOSOMAL PROTEIN S3"/>
    <property type="match status" value="1"/>
</dbReference>
<dbReference type="PANTHER" id="PTHR11760:SF19">
    <property type="entry name" value="SMALL RIBOSOMAL SUBUNIT PROTEIN US3C"/>
    <property type="match status" value="1"/>
</dbReference>
<dbReference type="Pfam" id="PF07650">
    <property type="entry name" value="KH_2"/>
    <property type="match status" value="1"/>
</dbReference>
<dbReference type="Pfam" id="PF00189">
    <property type="entry name" value="Ribosomal_S3_C"/>
    <property type="match status" value="1"/>
</dbReference>
<dbReference type="SMART" id="SM00322">
    <property type="entry name" value="KH"/>
    <property type="match status" value="1"/>
</dbReference>
<dbReference type="SUPFAM" id="SSF54814">
    <property type="entry name" value="Prokaryotic type KH domain (KH-domain type II)"/>
    <property type="match status" value="1"/>
</dbReference>
<dbReference type="SUPFAM" id="SSF54821">
    <property type="entry name" value="Ribosomal protein S3 C-terminal domain"/>
    <property type="match status" value="1"/>
</dbReference>
<dbReference type="PROSITE" id="PS50823">
    <property type="entry name" value="KH_TYPE_2"/>
    <property type="match status" value="1"/>
</dbReference>
<dbReference type="PROSITE" id="PS00548">
    <property type="entry name" value="RIBOSOMAL_S3"/>
    <property type="match status" value="1"/>
</dbReference>
<accession>A8YXL1</accession>
<gene>
    <name evidence="1" type="primary">rpsC</name>
    <name type="ordered locus">lhv_0318</name>
</gene>
<name>RS3_LACH4</name>